<feature type="chain" id="PRO_0000120496" description="Ornithine aminotransferase">
    <location>
        <begin position="1"/>
        <end position="426"/>
    </location>
</feature>
<feature type="modified residue" description="N6-(pyridoxal phosphate)lysine" evidence="1">
    <location>
        <position position="291"/>
    </location>
</feature>
<reference key="1">
    <citation type="journal article" date="1993" name="J. Biol. Chem.">
        <title>Cloning of ornithine delta-aminotransferase cDNA from Vigna aconitifolia by trans-complementation in Escherichia coli and regulation of proline biosynthesis.</title>
        <authorList>
            <person name="Delauney A.J."/>
            <person name="Hu C.A.A."/>
            <person name="Kishor P.B.K."/>
            <person name="Verma D.P.S."/>
        </authorList>
    </citation>
    <scope>NUCLEOTIDE SEQUENCE [MRNA]</scope>
</reference>
<sequence length="426" mass="48139">MFKPHLLAVVSRCNSFFGCVDICCNWGNSAPRTLKGLKSVTSEQVFEREQKYGAHNYHHCSAYRAKGVSLDMEGKRYFDFLSAYSAVNQGHCHPKIVNTMVEQAQRLTLTSRAFYTDVLGEYEEFLTKLFNYDKVLPMNTGVEGGETACKIARCWAYMKKKVPENQAKIIFAENNFWGRTLSAISASTDPMSYDELRPYMPGFEIVKYNDTAALEKAFQDPNVCAYMVEPIQGEAGVVALDAGYLTEVRELCTKYNVLFIADEVQTGLARTGRMLAVDHEDVKPDLLILGKALSGGLYPVSAVLRDDHIMDCIQPGLHTAMDVMDPRMRILAASRYYVRVARERCENAQIQATYLRKELNTLPKDVVPVVRGKGLLNAIVINKKFDAWDVCLNLCKPTHGDIIRFATTGHHRGTDPRMCQYYQKYH</sequence>
<proteinExistence type="evidence at transcript level"/>
<protein>
    <recommendedName>
        <fullName>Ornithine aminotransferase</fullName>
        <ecNumber>2.6.1.13</ecNumber>
    </recommendedName>
    <alternativeName>
        <fullName>Ornithine--oxo-acid aminotransferase</fullName>
    </alternativeName>
</protein>
<keyword id="KW-0032">Aminotransferase</keyword>
<keyword id="KW-0663">Pyridoxal phosphate</keyword>
<keyword id="KW-0808">Transferase</keyword>
<comment type="catalytic activity">
    <reaction>
        <text>a 2-oxocarboxylate + L-ornithine = L-glutamate 5-semialdehyde + an L-alpha-amino acid</text>
        <dbReference type="Rhea" id="RHEA:13877"/>
        <dbReference type="ChEBI" id="CHEBI:35179"/>
        <dbReference type="ChEBI" id="CHEBI:46911"/>
        <dbReference type="ChEBI" id="CHEBI:58066"/>
        <dbReference type="ChEBI" id="CHEBI:59869"/>
        <dbReference type="EC" id="2.6.1.13"/>
    </reaction>
</comment>
<comment type="cofactor">
    <cofactor>
        <name>pyridoxal 5'-phosphate</name>
        <dbReference type="ChEBI" id="CHEBI:597326"/>
    </cofactor>
</comment>
<comment type="pathway">
    <text>Amino-acid biosynthesis; L-proline biosynthesis; L-glutamate 5-semialdehyde from L-ornithine: step 1/1.</text>
</comment>
<comment type="similarity">
    <text evidence="2">Belongs to the class-III pyridoxal-phosphate-dependent aminotransferase family.</text>
</comment>
<accession>P31893</accession>
<name>OAT_VIGAC</name>
<organism>
    <name type="scientific">Vigna aconitifolia</name>
    <name type="common">Moth bean</name>
    <name type="synonym">Phaseolus aconitifolius</name>
    <dbReference type="NCBI Taxonomy" id="3918"/>
    <lineage>
        <taxon>Eukaryota</taxon>
        <taxon>Viridiplantae</taxon>
        <taxon>Streptophyta</taxon>
        <taxon>Embryophyta</taxon>
        <taxon>Tracheophyta</taxon>
        <taxon>Spermatophyta</taxon>
        <taxon>Magnoliopsida</taxon>
        <taxon>eudicotyledons</taxon>
        <taxon>Gunneridae</taxon>
        <taxon>Pentapetalae</taxon>
        <taxon>rosids</taxon>
        <taxon>fabids</taxon>
        <taxon>Fabales</taxon>
        <taxon>Fabaceae</taxon>
        <taxon>Papilionoideae</taxon>
        <taxon>50 kb inversion clade</taxon>
        <taxon>NPAAA clade</taxon>
        <taxon>indigoferoid/millettioid clade</taxon>
        <taxon>Phaseoleae</taxon>
        <taxon>Vigna</taxon>
    </lineage>
</organism>
<dbReference type="EC" id="2.6.1.13"/>
<dbReference type="EMBL" id="L08400">
    <property type="protein sequence ID" value="AAA02916.1"/>
    <property type="molecule type" value="mRNA"/>
</dbReference>
<dbReference type="PIR" id="A48515">
    <property type="entry name" value="A48515"/>
</dbReference>
<dbReference type="SMR" id="P31893"/>
<dbReference type="BRENDA" id="2.6.1.13">
    <property type="organism ID" value="6650"/>
</dbReference>
<dbReference type="UniPathway" id="UPA00098">
    <property type="reaction ID" value="UER00358"/>
</dbReference>
<dbReference type="GO" id="GO:0005737">
    <property type="term" value="C:cytoplasm"/>
    <property type="evidence" value="ECO:0007669"/>
    <property type="project" value="TreeGrafter"/>
</dbReference>
<dbReference type="GO" id="GO:0042802">
    <property type="term" value="F:identical protein binding"/>
    <property type="evidence" value="ECO:0007669"/>
    <property type="project" value="TreeGrafter"/>
</dbReference>
<dbReference type="GO" id="GO:0004587">
    <property type="term" value="F:ornithine aminotransferase activity"/>
    <property type="evidence" value="ECO:0007669"/>
    <property type="project" value="UniProtKB-EC"/>
</dbReference>
<dbReference type="GO" id="GO:0030170">
    <property type="term" value="F:pyridoxal phosphate binding"/>
    <property type="evidence" value="ECO:0007669"/>
    <property type="project" value="InterPro"/>
</dbReference>
<dbReference type="GO" id="GO:0019544">
    <property type="term" value="P:arginine catabolic process to glutamate"/>
    <property type="evidence" value="ECO:0007669"/>
    <property type="project" value="TreeGrafter"/>
</dbReference>
<dbReference type="GO" id="GO:0010121">
    <property type="term" value="P:arginine catabolic process to proline via ornithine"/>
    <property type="evidence" value="ECO:0007669"/>
    <property type="project" value="TreeGrafter"/>
</dbReference>
<dbReference type="GO" id="GO:0055129">
    <property type="term" value="P:L-proline biosynthetic process"/>
    <property type="evidence" value="ECO:0007669"/>
    <property type="project" value="UniProtKB-UniPathway"/>
</dbReference>
<dbReference type="CDD" id="cd00610">
    <property type="entry name" value="OAT_like"/>
    <property type="match status" value="1"/>
</dbReference>
<dbReference type="FunFam" id="3.40.640.10:FF:000011">
    <property type="entry name" value="Ornithine aminotransferase"/>
    <property type="match status" value="1"/>
</dbReference>
<dbReference type="Gene3D" id="3.90.1150.10">
    <property type="entry name" value="Aspartate Aminotransferase, domain 1"/>
    <property type="match status" value="1"/>
</dbReference>
<dbReference type="Gene3D" id="3.40.640.10">
    <property type="entry name" value="Type I PLP-dependent aspartate aminotransferase-like (Major domain)"/>
    <property type="match status" value="1"/>
</dbReference>
<dbReference type="InterPro" id="IPR005814">
    <property type="entry name" value="Aminotrans_3"/>
</dbReference>
<dbReference type="InterPro" id="IPR049704">
    <property type="entry name" value="Aminotrans_3_PPA_site"/>
</dbReference>
<dbReference type="InterPro" id="IPR050103">
    <property type="entry name" value="Class-III_PLP-dep_AT"/>
</dbReference>
<dbReference type="InterPro" id="IPR010164">
    <property type="entry name" value="Orn_aminotrans"/>
</dbReference>
<dbReference type="InterPro" id="IPR015424">
    <property type="entry name" value="PyrdxlP-dep_Trfase"/>
</dbReference>
<dbReference type="InterPro" id="IPR015421">
    <property type="entry name" value="PyrdxlP-dep_Trfase_major"/>
</dbReference>
<dbReference type="InterPro" id="IPR015422">
    <property type="entry name" value="PyrdxlP-dep_Trfase_small"/>
</dbReference>
<dbReference type="NCBIfam" id="TIGR01885">
    <property type="entry name" value="Orn_aminotrans"/>
    <property type="match status" value="1"/>
</dbReference>
<dbReference type="PANTHER" id="PTHR11986">
    <property type="entry name" value="AMINOTRANSFERASE CLASS III"/>
    <property type="match status" value="1"/>
</dbReference>
<dbReference type="PANTHER" id="PTHR11986:SF18">
    <property type="entry name" value="ORNITHINE AMINOTRANSFERASE, MITOCHONDRIAL"/>
    <property type="match status" value="1"/>
</dbReference>
<dbReference type="Pfam" id="PF00202">
    <property type="entry name" value="Aminotran_3"/>
    <property type="match status" value="1"/>
</dbReference>
<dbReference type="PIRSF" id="PIRSF000521">
    <property type="entry name" value="Transaminase_4ab_Lys_Orn"/>
    <property type="match status" value="1"/>
</dbReference>
<dbReference type="SUPFAM" id="SSF53383">
    <property type="entry name" value="PLP-dependent transferases"/>
    <property type="match status" value="1"/>
</dbReference>
<dbReference type="PROSITE" id="PS00600">
    <property type="entry name" value="AA_TRANSFER_CLASS_3"/>
    <property type="match status" value="1"/>
</dbReference>
<evidence type="ECO:0000250" key="1"/>
<evidence type="ECO:0000305" key="2"/>